<comment type="function">
    <text evidence="1">Catalyzes the formation of 4-diphosphocytidyl-2-C-methyl-D-erythritol from CTP and 2-C-methyl-D-erythritol 4-phosphate (MEP).</text>
</comment>
<comment type="catalytic activity">
    <reaction evidence="1">
        <text>2-C-methyl-D-erythritol 4-phosphate + CTP + H(+) = 4-CDP-2-C-methyl-D-erythritol + diphosphate</text>
        <dbReference type="Rhea" id="RHEA:13429"/>
        <dbReference type="ChEBI" id="CHEBI:15378"/>
        <dbReference type="ChEBI" id="CHEBI:33019"/>
        <dbReference type="ChEBI" id="CHEBI:37563"/>
        <dbReference type="ChEBI" id="CHEBI:57823"/>
        <dbReference type="ChEBI" id="CHEBI:58262"/>
        <dbReference type="EC" id="2.7.7.60"/>
    </reaction>
</comment>
<comment type="pathway">
    <text evidence="1">Isoprenoid biosynthesis; isopentenyl diphosphate biosynthesis via DXP pathway; isopentenyl diphosphate from 1-deoxy-D-xylulose 5-phosphate: step 2/6.</text>
</comment>
<comment type="similarity">
    <text evidence="1">Belongs to the IspD/TarI cytidylyltransferase family. IspD subfamily.</text>
</comment>
<gene>
    <name evidence="1" type="primary">ispD</name>
    <name type="ordered locus">XOO2812</name>
</gene>
<evidence type="ECO:0000255" key="1">
    <source>
        <dbReference type="HAMAP-Rule" id="MF_00108"/>
    </source>
</evidence>
<keyword id="KW-0414">Isoprene biosynthesis</keyword>
<keyword id="KW-0548">Nucleotidyltransferase</keyword>
<keyword id="KW-0808">Transferase</keyword>
<organism>
    <name type="scientific">Xanthomonas oryzae pv. oryzae (strain MAFF 311018)</name>
    <dbReference type="NCBI Taxonomy" id="342109"/>
    <lineage>
        <taxon>Bacteria</taxon>
        <taxon>Pseudomonadati</taxon>
        <taxon>Pseudomonadota</taxon>
        <taxon>Gammaproteobacteria</taxon>
        <taxon>Lysobacterales</taxon>
        <taxon>Lysobacteraceae</taxon>
        <taxon>Xanthomonas</taxon>
    </lineage>
</organism>
<protein>
    <recommendedName>
        <fullName evidence="1">2-C-methyl-D-erythritol 4-phosphate cytidylyltransferase</fullName>
        <ecNumber evidence="1">2.7.7.60</ecNumber>
    </recommendedName>
    <alternativeName>
        <fullName evidence="1">4-diphosphocytidyl-2C-methyl-D-erythritol synthase</fullName>
    </alternativeName>
    <alternativeName>
        <fullName evidence="1">MEP cytidylyltransferase</fullName>
        <shortName evidence="1">MCT</shortName>
    </alternativeName>
</protein>
<dbReference type="EC" id="2.7.7.60" evidence="1"/>
<dbReference type="EMBL" id="AP008229">
    <property type="protein sequence ID" value="BAE69567.1"/>
    <property type="molecule type" value="Genomic_DNA"/>
</dbReference>
<dbReference type="RefSeq" id="WP_011408894.1">
    <property type="nucleotide sequence ID" value="NC_007705.1"/>
</dbReference>
<dbReference type="SMR" id="Q2P1L0"/>
<dbReference type="KEGG" id="xom:XOO2812"/>
<dbReference type="HOGENOM" id="CLU_061281_3_1_6"/>
<dbReference type="UniPathway" id="UPA00056">
    <property type="reaction ID" value="UER00093"/>
</dbReference>
<dbReference type="GO" id="GO:0050518">
    <property type="term" value="F:2-C-methyl-D-erythritol 4-phosphate cytidylyltransferase activity"/>
    <property type="evidence" value="ECO:0007669"/>
    <property type="project" value="UniProtKB-UniRule"/>
</dbReference>
<dbReference type="GO" id="GO:0019288">
    <property type="term" value="P:isopentenyl diphosphate biosynthetic process, methylerythritol 4-phosphate pathway"/>
    <property type="evidence" value="ECO:0007669"/>
    <property type="project" value="UniProtKB-UniRule"/>
</dbReference>
<dbReference type="CDD" id="cd02516">
    <property type="entry name" value="CDP-ME_synthetase"/>
    <property type="match status" value="1"/>
</dbReference>
<dbReference type="FunFam" id="3.90.550.10:FF:000003">
    <property type="entry name" value="2-C-methyl-D-erythritol 4-phosphate cytidylyltransferase"/>
    <property type="match status" value="1"/>
</dbReference>
<dbReference type="Gene3D" id="3.90.550.10">
    <property type="entry name" value="Spore Coat Polysaccharide Biosynthesis Protein SpsA, Chain A"/>
    <property type="match status" value="1"/>
</dbReference>
<dbReference type="HAMAP" id="MF_00108">
    <property type="entry name" value="IspD"/>
    <property type="match status" value="1"/>
</dbReference>
<dbReference type="InterPro" id="IPR001228">
    <property type="entry name" value="IspD"/>
</dbReference>
<dbReference type="InterPro" id="IPR034683">
    <property type="entry name" value="IspD/TarI"/>
</dbReference>
<dbReference type="InterPro" id="IPR050088">
    <property type="entry name" value="IspD/TarI_cytidylyltransf_bact"/>
</dbReference>
<dbReference type="InterPro" id="IPR018294">
    <property type="entry name" value="ISPD_synthase_CS"/>
</dbReference>
<dbReference type="InterPro" id="IPR029044">
    <property type="entry name" value="Nucleotide-diphossugar_trans"/>
</dbReference>
<dbReference type="NCBIfam" id="TIGR00453">
    <property type="entry name" value="ispD"/>
    <property type="match status" value="1"/>
</dbReference>
<dbReference type="PANTHER" id="PTHR32125">
    <property type="entry name" value="2-C-METHYL-D-ERYTHRITOL 4-PHOSPHATE CYTIDYLYLTRANSFERASE, CHLOROPLASTIC"/>
    <property type="match status" value="1"/>
</dbReference>
<dbReference type="PANTHER" id="PTHR32125:SF4">
    <property type="entry name" value="2-C-METHYL-D-ERYTHRITOL 4-PHOSPHATE CYTIDYLYLTRANSFERASE, CHLOROPLASTIC"/>
    <property type="match status" value="1"/>
</dbReference>
<dbReference type="Pfam" id="PF01128">
    <property type="entry name" value="IspD"/>
    <property type="match status" value="1"/>
</dbReference>
<dbReference type="SUPFAM" id="SSF53448">
    <property type="entry name" value="Nucleotide-diphospho-sugar transferases"/>
    <property type="match status" value="1"/>
</dbReference>
<dbReference type="PROSITE" id="PS01295">
    <property type="entry name" value="ISPD"/>
    <property type="match status" value="1"/>
</dbReference>
<name>ISPD_XANOM</name>
<accession>Q2P1L0</accession>
<proteinExistence type="inferred from homology"/>
<sequence length="272" mass="28505">MTGSIWAGSIWAIVPAAGRGTRFGGPLPKQYLQAGGQPLMAYTLMALAAHPALAGIVVAIAPDDADWPGWTAVQSKPVLTCLGGATRAASVLAGVLALPESVRADDFVLVHDAARPNLALADLDRLLEIGRGDPVGAILAAPVRDTLKRAGDDGGIDGTEPRERLWRALTPQLFRRHQLIRGLTEASAAGVDVTDEAMAMERMGLRPLLVEGAEDNFKVTTPADLARFEFELARRGIAVDADALEAPAVNAQSNARNVATQLATVSHGNDAT</sequence>
<reference key="1">
    <citation type="journal article" date="2005" name="Jpn. Agric. Res. Q.">
        <title>Genome sequence of Xanthomonas oryzae pv. oryzae suggests contribution of large numbers of effector genes and insertion sequences to its race diversity.</title>
        <authorList>
            <person name="Ochiai H."/>
            <person name="Inoue Y."/>
            <person name="Takeya M."/>
            <person name="Sasaki A."/>
            <person name="Kaku H."/>
        </authorList>
    </citation>
    <scope>NUCLEOTIDE SEQUENCE [LARGE SCALE GENOMIC DNA]</scope>
    <source>
        <strain>MAFF 311018</strain>
    </source>
</reference>
<feature type="chain" id="PRO_0000237838" description="2-C-methyl-D-erythritol 4-phosphate cytidylyltransferase">
    <location>
        <begin position="1"/>
        <end position="272"/>
    </location>
</feature>
<feature type="site" description="Transition state stabilizer" evidence="1">
    <location>
        <position position="22"/>
    </location>
</feature>
<feature type="site" description="Transition state stabilizer" evidence="1">
    <location>
        <position position="29"/>
    </location>
</feature>
<feature type="site" description="Positions MEP for the nucleophilic attack" evidence="1">
    <location>
        <position position="162"/>
    </location>
</feature>
<feature type="site" description="Positions MEP for the nucleophilic attack" evidence="1">
    <location>
        <position position="218"/>
    </location>
</feature>